<evidence type="ECO:0000250" key="1"/>
<evidence type="ECO:0000305" key="2"/>
<evidence type="ECO:0007829" key="3">
    <source>
        <dbReference type="PDB" id="1APA"/>
    </source>
</evidence>
<sequence length="294" mass="33069">MKMMVVVVVMMLSWLILKPPSTWAINTITFDVGNATINKYATFMKSIHNQAKDPTLKCYGIPMLPNTNLTPKYLLVTLQDSSLKTITLMLKRNNLYVMGYADTYNGKCRYHIFKDISNTTERNDVMTTLCPNPSSRVGKNINYDSSYPALEKKVGRPRSQVQLGIQILNSGIGKIYGVDSFTEKTEAEFLLVAIQMVSEAARFKYIENQVKTNFNRAFYPNAKVLNLEESWGKISTAIHNAKNGALTSPLELKNANGSKWIVLRVDDIEPDVGLLKYVNGTCQATYQSAMFPHL</sequence>
<name>RIPA_PHYAM</name>
<comment type="function">
    <text>Inhibits viral infection of plants, and protein synthesis in vitro. Has also been shown to inhibit the replication of mammalian viruses. The protein may provide a means of cellular suicide upon invasion by a virus.</text>
</comment>
<comment type="catalytic activity">
    <reaction>
        <text>Endohydrolysis of the N-glycosidic bond at one specific adenosine on the 28S rRNA.</text>
        <dbReference type="EC" id="3.2.2.22"/>
    </reaction>
</comment>
<comment type="subunit">
    <text>Monomer.</text>
</comment>
<comment type="subcellular location">
    <subcellularLocation>
        <location>Secreted</location>
        <location>Cell wall</location>
    </subcellularLocation>
</comment>
<comment type="similarity">
    <text evidence="2">Belongs to the ribosome-inactivating protein family. Type 1 RIP subfamily.</text>
</comment>
<organism>
    <name type="scientific">Phytolacca americana</name>
    <name type="common">American pokeweed</name>
    <name type="synonym">Phytolacca decandra</name>
    <dbReference type="NCBI Taxonomy" id="3527"/>
    <lineage>
        <taxon>Eukaryota</taxon>
        <taxon>Viridiplantae</taxon>
        <taxon>Streptophyta</taxon>
        <taxon>Embryophyta</taxon>
        <taxon>Tracheophyta</taxon>
        <taxon>Spermatophyta</taxon>
        <taxon>Magnoliopsida</taxon>
        <taxon>eudicotyledons</taxon>
        <taxon>Gunneridae</taxon>
        <taxon>Pentapetalae</taxon>
        <taxon>Caryophyllales</taxon>
        <taxon>Phytolaccaceae</taxon>
        <taxon>Phytolacca</taxon>
    </lineage>
</organism>
<protein>
    <recommendedName>
        <fullName>Antiviral protein alpha</fullName>
        <ecNumber>3.2.2.22</ecNumber>
    </recommendedName>
    <alternativeName>
        <fullName>PAP-alpha</fullName>
    </alternativeName>
    <alternativeName>
        <fullName>Ribosome-inactivating protein</fullName>
    </alternativeName>
    <alternativeName>
        <fullName>rRNA N-glycosidase</fullName>
    </alternativeName>
</protein>
<accession>Q03464</accession>
<proteinExistence type="evidence at protein level"/>
<feature type="signal peptide" evidence="1">
    <location>
        <begin position="1"/>
        <end position="24"/>
    </location>
</feature>
<feature type="chain" id="PRO_0000030779" description="Antiviral protein alpha">
    <location>
        <begin position="25"/>
        <end position="285"/>
    </location>
</feature>
<feature type="propeptide" id="PRO_0000030780">
    <location>
        <begin position="286"/>
        <end position="294"/>
    </location>
</feature>
<feature type="active site" evidence="1">
    <location>
        <position position="199"/>
    </location>
</feature>
<feature type="disulfide bond">
    <location>
        <begin position="58"/>
        <end position="282"/>
    </location>
</feature>
<feature type="disulfide bond">
    <location>
        <begin position="108"/>
        <end position="130"/>
    </location>
</feature>
<feature type="strand" evidence="3">
    <location>
        <begin position="28"/>
        <end position="31"/>
    </location>
</feature>
<feature type="helix" evidence="3">
    <location>
        <begin position="32"/>
        <end position="34"/>
    </location>
</feature>
<feature type="helix" evidence="3">
    <location>
        <begin position="37"/>
        <end position="51"/>
    </location>
</feature>
<feature type="strand" evidence="3">
    <location>
        <begin position="61"/>
        <end position="63"/>
    </location>
</feature>
<feature type="strand" evidence="3">
    <location>
        <begin position="69"/>
        <end position="71"/>
    </location>
</feature>
<feature type="strand" evidence="3">
    <location>
        <begin position="73"/>
        <end position="79"/>
    </location>
</feature>
<feature type="strand" evidence="3">
    <location>
        <begin position="85"/>
        <end position="91"/>
    </location>
</feature>
<feature type="turn" evidence="3">
    <location>
        <begin position="92"/>
        <end position="94"/>
    </location>
</feature>
<feature type="strand" evidence="3">
    <location>
        <begin position="97"/>
        <end position="104"/>
    </location>
</feature>
<feature type="strand" evidence="3">
    <location>
        <begin position="107"/>
        <end position="113"/>
    </location>
</feature>
<feature type="helix" evidence="3">
    <location>
        <begin position="119"/>
        <end position="129"/>
    </location>
</feature>
<feature type="strand" evidence="3">
    <location>
        <begin position="132"/>
        <end position="138"/>
    </location>
</feature>
<feature type="helix" evidence="3">
    <location>
        <begin position="147"/>
        <end position="154"/>
    </location>
</feature>
<feature type="helix" evidence="3">
    <location>
        <begin position="158"/>
        <end position="160"/>
    </location>
</feature>
<feature type="helix" evidence="3">
    <location>
        <begin position="165"/>
        <end position="175"/>
    </location>
</feature>
<feature type="helix" evidence="3">
    <location>
        <begin position="183"/>
        <end position="195"/>
    </location>
</feature>
<feature type="helix" evidence="3">
    <location>
        <begin position="198"/>
        <end position="202"/>
    </location>
</feature>
<feature type="helix" evidence="3">
    <location>
        <begin position="204"/>
        <end position="212"/>
    </location>
</feature>
<feature type="turn" evidence="3">
    <location>
        <begin position="213"/>
        <end position="215"/>
    </location>
</feature>
<feature type="helix" evidence="3">
    <location>
        <begin position="222"/>
        <end position="240"/>
    </location>
</feature>
<feature type="strand" evidence="3">
    <location>
        <begin position="245"/>
        <end position="253"/>
    </location>
</feature>
<feature type="strand" evidence="3">
    <location>
        <begin position="259"/>
        <end position="264"/>
    </location>
</feature>
<feature type="helix" evidence="3">
    <location>
        <begin position="265"/>
        <end position="268"/>
    </location>
</feature>
<feature type="helix" evidence="3">
    <location>
        <begin position="269"/>
        <end position="271"/>
    </location>
</feature>
<keyword id="KW-0002">3D-structure</keyword>
<keyword id="KW-0051">Antiviral defense</keyword>
<keyword id="KW-0134">Cell wall</keyword>
<keyword id="KW-1015">Disulfide bond</keyword>
<keyword id="KW-0378">Hydrolase</keyword>
<keyword id="KW-0611">Plant defense</keyword>
<keyword id="KW-0652">Protein synthesis inhibitor</keyword>
<keyword id="KW-0964">Secreted</keyword>
<keyword id="KW-0732">Signal</keyword>
<keyword id="KW-0800">Toxin</keyword>
<dbReference type="EC" id="3.2.2.22"/>
<dbReference type="EMBL" id="D10600">
    <property type="protein sequence ID" value="BAA01451.1"/>
    <property type="molecule type" value="Genomic_DNA"/>
</dbReference>
<dbReference type="PIR" id="S28421">
    <property type="entry name" value="S28421"/>
</dbReference>
<dbReference type="PDB" id="1APA">
    <property type="method" value="X-ray"/>
    <property type="resolution" value="2.30 A"/>
    <property type="chains" value="A=22-285"/>
</dbReference>
<dbReference type="PDBsum" id="1APA"/>
<dbReference type="SMR" id="Q03464"/>
<dbReference type="EvolutionaryTrace" id="Q03464"/>
<dbReference type="GO" id="GO:0005576">
    <property type="term" value="C:extracellular region"/>
    <property type="evidence" value="ECO:0007669"/>
    <property type="project" value="UniProtKB-KW"/>
</dbReference>
<dbReference type="GO" id="GO:0030598">
    <property type="term" value="F:rRNA N-glycosylase activity"/>
    <property type="evidence" value="ECO:0007669"/>
    <property type="project" value="UniProtKB-EC"/>
</dbReference>
<dbReference type="GO" id="GO:0090729">
    <property type="term" value="F:toxin activity"/>
    <property type="evidence" value="ECO:0007669"/>
    <property type="project" value="UniProtKB-KW"/>
</dbReference>
<dbReference type="GO" id="GO:0051607">
    <property type="term" value="P:defense response to virus"/>
    <property type="evidence" value="ECO:0007669"/>
    <property type="project" value="UniProtKB-KW"/>
</dbReference>
<dbReference type="GO" id="GO:0017148">
    <property type="term" value="P:negative regulation of translation"/>
    <property type="evidence" value="ECO:0007669"/>
    <property type="project" value="UniProtKB-KW"/>
</dbReference>
<dbReference type="FunFam" id="4.10.470.10:FF:000002">
    <property type="entry name" value="Antiviral protein I"/>
    <property type="match status" value="1"/>
</dbReference>
<dbReference type="FunFam" id="3.40.420.10:FF:000001">
    <property type="entry name" value="Ricin"/>
    <property type="match status" value="1"/>
</dbReference>
<dbReference type="Gene3D" id="3.40.420.10">
    <property type="entry name" value="Ricin (A subunit), domain 1"/>
    <property type="match status" value="1"/>
</dbReference>
<dbReference type="Gene3D" id="4.10.470.10">
    <property type="entry name" value="Ricin (A Subunit), domain 2"/>
    <property type="match status" value="1"/>
</dbReference>
<dbReference type="InterPro" id="IPR036041">
    <property type="entry name" value="Ribosome-inact_prot_sf"/>
</dbReference>
<dbReference type="InterPro" id="IPR017989">
    <property type="entry name" value="Ribosome_inactivat_1/2"/>
</dbReference>
<dbReference type="InterPro" id="IPR001574">
    <property type="entry name" value="Ribosome_inactivat_prot"/>
</dbReference>
<dbReference type="InterPro" id="IPR017988">
    <property type="entry name" value="Ribosome_inactivat_prot_CS"/>
</dbReference>
<dbReference type="InterPro" id="IPR016138">
    <property type="entry name" value="Ribosome_inactivat_prot_sub1"/>
</dbReference>
<dbReference type="InterPro" id="IPR016139">
    <property type="entry name" value="Ribosome_inactivat_prot_sub2"/>
</dbReference>
<dbReference type="PANTHER" id="PTHR33453">
    <property type="match status" value="1"/>
</dbReference>
<dbReference type="PANTHER" id="PTHR33453:SF34">
    <property type="entry name" value="RIBOSOME-INACTIVATING PROTEIN"/>
    <property type="match status" value="1"/>
</dbReference>
<dbReference type="Pfam" id="PF00161">
    <property type="entry name" value="RIP"/>
    <property type="match status" value="1"/>
</dbReference>
<dbReference type="PRINTS" id="PR00396">
    <property type="entry name" value="SHIGARICIN"/>
</dbReference>
<dbReference type="SUPFAM" id="SSF56371">
    <property type="entry name" value="Ribosome inactivating proteins (RIP)"/>
    <property type="match status" value="1"/>
</dbReference>
<dbReference type="PROSITE" id="PS00275">
    <property type="entry name" value="SHIGA_RICIN"/>
    <property type="match status" value="1"/>
</dbReference>
<reference key="1">
    <citation type="journal article" date="1992" name="Plant Mol. Biol.">
        <title>Isolation and analysis of a genomic clone encoding a pokeweed antiviral protein.</title>
        <authorList>
            <person name="Kataoka J."/>
            <person name="Habuka N."/>
            <person name="Masuta C."/>
            <person name="Miyano M."/>
            <person name="Koiwai A."/>
        </authorList>
    </citation>
    <scope>NUCLEOTIDE SEQUENCE [GENOMIC DNA]</scope>
    <source>
        <tissue>Leaf</tissue>
        <tissue>Root</tissue>
        <tissue>Seed</tissue>
    </source>
</reference>
<reference key="2">
    <citation type="journal article" date="1994" name="Eur. J. Biochem.">
        <title>X-ray structure of a pokeweed antiviral protein, coded by a new genomic clone, at 0.23-nm resolution. A model structure provides a suitable electrostatic field for substrate binding.</title>
        <authorList>
            <person name="Ago H."/>
            <person name="Kataoka J."/>
            <person name="Tsuge H."/>
            <person name="Hakuba N."/>
            <person name="Inagaki E."/>
            <person name="Noma M."/>
            <person name="Miyano M."/>
        </authorList>
    </citation>
    <scope>X-RAY CRYSTALLOGRAPHY (2.3 ANGSTROMS)</scope>
</reference>